<evidence type="ECO:0000255" key="1">
    <source>
        <dbReference type="HAMAP-Rule" id="MF_01062"/>
    </source>
</evidence>
<accession>Q3SL47</accession>
<keyword id="KW-0418">Kinase</keyword>
<keyword id="KW-0547">Nucleotide-binding</keyword>
<keyword id="KW-1185">Reference proteome</keyword>
<keyword id="KW-0723">Serine/threonine-protein kinase</keyword>
<keyword id="KW-0808">Transferase</keyword>
<gene>
    <name type="ordered locus">Tbd_0617</name>
</gene>
<feature type="chain" id="PRO_0000196734" description="Putative phosphoenolpyruvate synthase regulatory protein">
    <location>
        <begin position="1"/>
        <end position="258"/>
    </location>
</feature>
<feature type="binding site" evidence="1">
    <location>
        <begin position="146"/>
        <end position="153"/>
    </location>
    <ligand>
        <name>ADP</name>
        <dbReference type="ChEBI" id="CHEBI:456216"/>
    </ligand>
</feature>
<proteinExistence type="inferred from homology"/>
<name>PSRP_THIDA</name>
<sequence>MNGYSVFCVSDHTGLTIEAVAKSVLAQFPRIEFSLITLPFIDDAAKARAAAGRVAVTARALVFSSLTDPALRAHFKDAGLHVFDLFEHVSPAVERVLGEPATPSGGHTHGMASDYEARMDAVNFALRLDDGLSPEHLGQADLILVGVSRVGKTPTALYLALHYGLRAANYPLTPDDLANDGLPRALQPHLPRLRGLTLAPERLAAIREARLPGSRYASVAQCRSELDAAERLLAAHAIPLIDTSRMSVEEIAARLRAS</sequence>
<dbReference type="EC" id="2.7.11.33" evidence="1"/>
<dbReference type="EC" id="2.7.4.28" evidence="1"/>
<dbReference type="EMBL" id="CP000116">
    <property type="protein sequence ID" value="AAZ96570.1"/>
    <property type="molecule type" value="Genomic_DNA"/>
</dbReference>
<dbReference type="RefSeq" id="WP_011311129.1">
    <property type="nucleotide sequence ID" value="NC_007404.1"/>
</dbReference>
<dbReference type="SMR" id="Q3SL47"/>
<dbReference type="STRING" id="292415.Tbd_0617"/>
<dbReference type="KEGG" id="tbd:Tbd_0617"/>
<dbReference type="eggNOG" id="COG1806">
    <property type="taxonomic scope" value="Bacteria"/>
</dbReference>
<dbReference type="HOGENOM" id="CLU_046206_1_0_4"/>
<dbReference type="OrthoDB" id="9782201at2"/>
<dbReference type="Proteomes" id="UP000008291">
    <property type="component" value="Chromosome"/>
</dbReference>
<dbReference type="GO" id="GO:0043531">
    <property type="term" value="F:ADP binding"/>
    <property type="evidence" value="ECO:0007669"/>
    <property type="project" value="UniProtKB-UniRule"/>
</dbReference>
<dbReference type="GO" id="GO:0005524">
    <property type="term" value="F:ATP binding"/>
    <property type="evidence" value="ECO:0007669"/>
    <property type="project" value="InterPro"/>
</dbReference>
<dbReference type="GO" id="GO:0016776">
    <property type="term" value="F:phosphotransferase activity, phosphate group as acceptor"/>
    <property type="evidence" value="ECO:0007669"/>
    <property type="project" value="UniProtKB-UniRule"/>
</dbReference>
<dbReference type="GO" id="GO:0004674">
    <property type="term" value="F:protein serine/threonine kinase activity"/>
    <property type="evidence" value="ECO:0007669"/>
    <property type="project" value="UniProtKB-UniRule"/>
</dbReference>
<dbReference type="HAMAP" id="MF_01062">
    <property type="entry name" value="PSRP"/>
    <property type="match status" value="1"/>
</dbReference>
<dbReference type="InterPro" id="IPR005177">
    <property type="entry name" value="Kinase-pyrophosphorylase"/>
</dbReference>
<dbReference type="InterPro" id="IPR026530">
    <property type="entry name" value="PSRP"/>
</dbReference>
<dbReference type="NCBIfam" id="NF003742">
    <property type="entry name" value="PRK05339.1"/>
    <property type="match status" value="1"/>
</dbReference>
<dbReference type="PANTHER" id="PTHR31756">
    <property type="entry name" value="PYRUVATE, PHOSPHATE DIKINASE REGULATORY PROTEIN 1, CHLOROPLASTIC"/>
    <property type="match status" value="1"/>
</dbReference>
<dbReference type="PANTHER" id="PTHR31756:SF3">
    <property type="entry name" value="PYRUVATE, PHOSPHATE DIKINASE REGULATORY PROTEIN 1, CHLOROPLASTIC"/>
    <property type="match status" value="1"/>
</dbReference>
<dbReference type="Pfam" id="PF03618">
    <property type="entry name" value="Kinase-PPPase"/>
    <property type="match status" value="1"/>
</dbReference>
<comment type="function">
    <text evidence="1">Bifunctional serine/threonine kinase and phosphorylase involved in the regulation of the phosphoenolpyruvate synthase (PEPS) by catalyzing its phosphorylation/dephosphorylation.</text>
</comment>
<comment type="catalytic activity">
    <reaction evidence="1">
        <text>[pyruvate, water dikinase] + ADP = [pyruvate, water dikinase]-phosphate + AMP + H(+)</text>
        <dbReference type="Rhea" id="RHEA:46020"/>
        <dbReference type="Rhea" id="RHEA-COMP:11425"/>
        <dbReference type="Rhea" id="RHEA-COMP:11426"/>
        <dbReference type="ChEBI" id="CHEBI:15378"/>
        <dbReference type="ChEBI" id="CHEBI:43176"/>
        <dbReference type="ChEBI" id="CHEBI:68546"/>
        <dbReference type="ChEBI" id="CHEBI:456215"/>
        <dbReference type="ChEBI" id="CHEBI:456216"/>
        <dbReference type="EC" id="2.7.11.33"/>
    </reaction>
</comment>
<comment type="catalytic activity">
    <reaction evidence="1">
        <text>[pyruvate, water dikinase]-phosphate + phosphate + H(+) = [pyruvate, water dikinase] + diphosphate</text>
        <dbReference type="Rhea" id="RHEA:48580"/>
        <dbReference type="Rhea" id="RHEA-COMP:11425"/>
        <dbReference type="Rhea" id="RHEA-COMP:11426"/>
        <dbReference type="ChEBI" id="CHEBI:15378"/>
        <dbReference type="ChEBI" id="CHEBI:33019"/>
        <dbReference type="ChEBI" id="CHEBI:43176"/>
        <dbReference type="ChEBI" id="CHEBI:43474"/>
        <dbReference type="ChEBI" id="CHEBI:68546"/>
        <dbReference type="EC" id="2.7.4.28"/>
    </reaction>
</comment>
<comment type="similarity">
    <text evidence="1">Belongs to the pyruvate, phosphate/water dikinase regulatory protein family. PSRP subfamily.</text>
</comment>
<protein>
    <recommendedName>
        <fullName evidence="1">Putative phosphoenolpyruvate synthase regulatory protein</fullName>
        <shortName evidence="1">PEP synthase regulatory protein</shortName>
        <shortName evidence="1">PSRP</shortName>
        <ecNumber evidence="1">2.7.11.33</ecNumber>
        <ecNumber evidence="1">2.7.4.28</ecNumber>
    </recommendedName>
    <alternativeName>
        <fullName evidence="1">Pyruvate, water dikinase regulatory protein</fullName>
    </alternativeName>
</protein>
<organism>
    <name type="scientific">Thiobacillus denitrificans (strain ATCC 25259 / T1)</name>
    <dbReference type="NCBI Taxonomy" id="292415"/>
    <lineage>
        <taxon>Bacteria</taxon>
        <taxon>Pseudomonadati</taxon>
        <taxon>Pseudomonadota</taxon>
        <taxon>Betaproteobacteria</taxon>
        <taxon>Nitrosomonadales</taxon>
        <taxon>Thiobacillaceae</taxon>
        <taxon>Thiobacillus</taxon>
    </lineage>
</organism>
<reference key="1">
    <citation type="journal article" date="2006" name="J. Bacteriol.">
        <title>The genome sequence of the obligately chemolithoautotrophic, facultatively anaerobic bacterium Thiobacillus denitrificans.</title>
        <authorList>
            <person name="Beller H.R."/>
            <person name="Chain P.S."/>
            <person name="Letain T.E."/>
            <person name="Chakicherla A."/>
            <person name="Larimer F.W."/>
            <person name="Richardson P.M."/>
            <person name="Coleman M.A."/>
            <person name="Wood A.P."/>
            <person name="Kelly D.P."/>
        </authorList>
    </citation>
    <scope>NUCLEOTIDE SEQUENCE [LARGE SCALE GENOMIC DNA]</scope>
    <source>
        <strain>ATCC 25259 / T1</strain>
    </source>
</reference>